<protein>
    <recommendedName>
        <fullName evidence="1">GTP-dependent dephospho-CoA kinase</fullName>
        <ecNumber evidence="1">2.7.1.237</ecNumber>
    </recommendedName>
    <alternativeName>
        <fullName evidence="1">Dephospho-coenzyme A kinase</fullName>
        <shortName evidence="1">DPCK</shortName>
    </alternativeName>
</protein>
<proteinExistence type="inferred from homology"/>
<dbReference type="EC" id="2.7.1.237" evidence="1"/>
<dbReference type="EMBL" id="CP001404">
    <property type="protein sequence ID" value="ACP48228.1"/>
    <property type="molecule type" value="Genomic_DNA"/>
</dbReference>
<dbReference type="RefSeq" id="WP_012713909.1">
    <property type="nucleotide sequence ID" value="NC_012623.1"/>
</dbReference>
<dbReference type="SMR" id="C3NGG8"/>
<dbReference type="GeneID" id="7810853"/>
<dbReference type="KEGG" id="sin:YN1551_1122"/>
<dbReference type="HOGENOM" id="CLU_120795_1_0_2"/>
<dbReference type="UniPathway" id="UPA00241"/>
<dbReference type="Proteomes" id="UP000006818">
    <property type="component" value="Chromosome"/>
</dbReference>
<dbReference type="GO" id="GO:0005525">
    <property type="term" value="F:GTP binding"/>
    <property type="evidence" value="ECO:0007669"/>
    <property type="project" value="UniProtKB-UniRule"/>
</dbReference>
<dbReference type="GO" id="GO:0016301">
    <property type="term" value="F:kinase activity"/>
    <property type="evidence" value="ECO:0007669"/>
    <property type="project" value="UniProtKB-UniRule"/>
</dbReference>
<dbReference type="GO" id="GO:0015937">
    <property type="term" value="P:coenzyme A biosynthetic process"/>
    <property type="evidence" value="ECO:0007669"/>
    <property type="project" value="UniProtKB-UniRule"/>
</dbReference>
<dbReference type="HAMAP" id="MF_00590">
    <property type="entry name" value="Dephospho_CoA_kinase_GTP_dep"/>
    <property type="match status" value="1"/>
</dbReference>
<dbReference type="InterPro" id="IPR007164">
    <property type="entry name" value="GTP-dep_dephospho-CoA_kin"/>
</dbReference>
<dbReference type="PANTHER" id="PTHR40732:SF1">
    <property type="entry name" value="GTP-DEPENDENT DEPHOSPHO-COA KINASE"/>
    <property type="match status" value="1"/>
</dbReference>
<dbReference type="PANTHER" id="PTHR40732">
    <property type="entry name" value="UPF0218 PROTEIN TK1697"/>
    <property type="match status" value="1"/>
</dbReference>
<dbReference type="Pfam" id="PF04019">
    <property type="entry name" value="DUF359"/>
    <property type="match status" value="1"/>
</dbReference>
<dbReference type="PIRSF" id="PIRSF006533">
    <property type="entry name" value="UCP006533"/>
    <property type="match status" value="1"/>
</dbReference>
<evidence type="ECO:0000255" key="1">
    <source>
        <dbReference type="HAMAP-Rule" id="MF_00590"/>
    </source>
</evidence>
<gene>
    <name type="ordered locus">YN1551_1122</name>
</gene>
<keyword id="KW-0173">Coenzyme A biosynthesis</keyword>
<keyword id="KW-0342">GTP-binding</keyword>
<keyword id="KW-0418">Kinase</keyword>
<keyword id="KW-0547">Nucleotide-binding</keyword>
<keyword id="KW-0808">Transferase</keyword>
<accession>C3NGG8</accession>
<sequence>MEIRDNNKVNLCFAFDNLRKELSRPYGILFTNNKLFLDFVSKSIQQGFKVITVGDYVSRVLEENGIIPFLEVIDGKTKRSIPQRTIVKNKEYRVTNEAGKIRFEIFEIMENILKDRDGGVVFVNGEEDLLVIPVTLSADNGDIVIYGQPNAGAVVIIVNEMIRWRVRDILEKAVVKEC</sequence>
<reference key="1">
    <citation type="journal article" date="2009" name="Proc. Natl. Acad. Sci. U.S.A.">
        <title>Biogeography of the Sulfolobus islandicus pan-genome.</title>
        <authorList>
            <person name="Reno M.L."/>
            <person name="Held N.L."/>
            <person name="Fields C.J."/>
            <person name="Burke P.V."/>
            <person name="Whitaker R.J."/>
        </authorList>
    </citation>
    <scope>NUCLEOTIDE SEQUENCE [LARGE SCALE GENOMIC DNA]</scope>
    <source>
        <strain>Y.N.15.51 / Yellowstone #2</strain>
    </source>
</reference>
<feature type="chain" id="PRO_1000212168" description="GTP-dependent dephospho-CoA kinase">
    <location>
        <begin position="1"/>
        <end position="178"/>
    </location>
</feature>
<feature type="binding site" evidence="1">
    <location>
        <position position="55"/>
    </location>
    <ligand>
        <name>GTP</name>
        <dbReference type="ChEBI" id="CHEBI:37565"/>
    </ligand>
</feature>
<feature type="binding site" evidence="1">
    <location>
        <position position="57"/>
    </location>
    <ligand>
        <name>GTP</name>
        <dbReference type="ChEBI" id="CHEBI:37565"/>
    </ligand>
</feature>
<feature type="binding site" evidence="1">
    <location>
        <position position="74"/>
    </location>
    <ligand>
        <name>GTP</name>
        <dbReference type="ChEBI" id="CHEBI:37565"/>
    </ligand>
</feature>
<feature type="binding site" evidence="1">
    <location>
        <position position="76"/>
    </location>
    <ligand>
        <name>GTP</name>
        <dbReference type="ChEBI" id="CHEBI:37565"/>
    </ligand>
</feature>
<feature type="binding site" evidence="1">
    <location>
        <position position="127"/>
    </location>
    <ligand>
        <name>GTP</name>
        <dbReference type="ChEBI" id="CHEBI:37565"/>
    </ligand>
</feature>
<comment type="function">
    <text evidence="1">Catalyzes the GTP-dependent phosphorylation of the 3'-hydroxyl group of dephosphocoenzyme A to form coenzyme A (CoA).</text>
</comment>
<comment type="catalytic activity">
    <reaction evidence="1">
        <text>3'-dephospho-CoA + GTP = GDP + CoA + H(+)</text>
        <dbReference type="Rhea" id="RHEA:61156"/>
        <dbReference type="ChEBI" id="CHEBI:15378"/>
        <dbReference type="ChEBI" id="CHEBI:37565"/>
        <dbReference type="ChEBI" id="CHEBI:57287"/>
        <dbReference type="ChEBI" id="CHEBI:57328"/>
        <dbReference type="ChEBI" id="CHEBI:58189"/>
        <dbReference type="EC" id="2.7.1.237"/>
    </reaction>
</comment>
<comment type="pathway">
    <text evidence="1">Cofactor biosynthesis; coenzyme A biosynthesis.</text>
</comment>
<comment type="similarity">
    <text evidence="1">Belongs to the GTP-dependent DPCK family.</text>
</comment>
<name>DPCKG_SACI1</name>
<organism>
    <name type="scientific">Saccharolobus islandicus (strain Y.N.15.51 / Yellowstone #2)</name>
    <name type="common">Sulfolobus islandicus</name>
    <dbReference type="NCBI Taxonomy" id="419942"/>
    <lineage>
        <taxon>Archaea</taxon>
        <taxon>Thermoproteota</taxon>
        <taxon>Thermoprotei</taxon>
        <taxon>Sulfolobales</taxon>
        <taxon>Sulfolobaceae</taxon>
        <taxon>Saccharolobus</taxon>
    </lineage>
</organism>